<gene>
    <name evidence="1" type="primary">groEL</name>
    <name evidence="1" type="synonym">groL</name>
    <name type="ordered locus">YpAngola_A0722</name>
</gene>
<sequence length="548" mass="57431">MAAKDVKFGNDARIKMLRGVNILADAVKVTLGPKGRNVVLDKSFGSPTITKDGVSVAREIELEDKFENMGAQMVKEVASKANDAAGDGTTTATVLAQSIITEGLKAVAAGMNPMDLKRGIDKAVIAAVEELKKLSVPCSDSKAIAQVGTISANSDSTVGELIAQAMEKVGKEGVITVEEGSGLQDELDVVEGMQFDRGYLSPYFINKPETGSIELESPFILLADKKISNIREMLPVLEAVAKAGKPLLIIAEDVEGEALATLVVNTMRGIVKVAAVKAPGFGDRRKAMLQDIATLTAGTVISEEIGLELEKTTLEDLGQAKRVVINKDTTIIIDGVGDEAAIQGRVAQIRQQIEDATSDYDKEKLQERVAKLAGGVAVIKVGAATEVEMKEKKARVEDALHATRAAVEEGVVAGGGVALIRAAHAIAGLKGDNEDQNVGIKVALRAMESPLRQIVVNAGEEASVIANKVKAGEGSFGYNAYTEEYGDMIAMGILDPTKVTRSALQYAASIAGLMITTECMVTDLPRDDKGADMGAGGMGGMGGMGGMM</sequence>
<reference key="1">
    <citation type="journal article" date="2010" name="J. Bacteriol.">
        <title>Genome sequence of the deep-rooted Yersinia pestis strain Angola reveals new insights into the evolution and pangenome of the plague bacterium.</title>
        <authorList>
            <person name="Eppinger M."/>
            <person name="Worsham P.L."/>
            <person name="Nikolich M.P."/>
            <person name="Riley D.R."/>
            <person name="Sebastian Y."/>
            <person name="Mou S."/>
            <person name="Achtman M."/>
            <person name="Lindler L.E."/>
            <person name="Ravel J."/>
        </authorList>
    </citation>
    <scope>NUCLEOTIDE SEQUENCE [LARGE SCALE GENOMIC DNA]</scope>
    <source>
        <strain>Angola</strain>
    </source>
</reference>
<accession>A9QYQ1</accession>
<keyword id="KW-0067">ATP-binding</keyword>
<keyword id="KW-0143">Chaperone</keyword>
<keyword id="KW-0963">Cytoplasm</keyword>
<keyword id="KW-0413">Isomerase</keyword>
<keyword id="KW-0547">Nucleotide-binding</keyword>
<evidence type="ECO:0000255" key="1">
    <source>
        <dbReference type="HAMAP-Rule" id="MF_00600"/>
    </source>
</evidence>
<dbReference type="EC" id="5.6.1.7" evidence="1"/>
<dbReference type="EMBL" id="CP000901">
    <property type="protein sequence ID" value="ABX85310.1"/>
    <property type="molecule type" value="Genomic_DNA"/>
</dbReference>
<dbReference type="RefSeq" id="WP_002209128.1">
    <property type="nucleotide sequence ID" value="NZ_CP009935.1"/>
</dbReference>
<dbReference type="SMR" id="A9QYQ1"/>
<dbReference type="GeneID" id="57974257"/>
<dbReference type="KEGG" id="ypg:YpAngola_A0722"/>
<dbReference type="PATRIC" id="fig|349746.12.peg.1669"/>
<dbReference type="GO" id="GO:0005737">
    <property type="term" value="C:cytoplasm"/>
    <property type="evidence" value="ECO:0007669"/>
    <property type="project" value="UniProtKB-SubCell"/>
</dbReference>
<dbReference type="GO" id="GO:0005524">
    <property type="term" value="F:ATP binding"/>
    <property type="evidence" value="ECO:0007669"/>
    <property type="project" value="UniProtKB-UniRule"/>
</dbReference>
<dbReference type="GO" id="GO:0140662">
    <property type="term" value="F:ATP-dependent protein folding chaperone"/>
    <property type="evidence" value="ECO:0007669"/>
    <property type="project" value="InterPro"/>
</dbReference>
<dbReference type="GO" id="GO:0016853">
    <property type="term" value="F:isomerase activity"/>
    <property type="evidence" value="ECO:0007669"/>
    <property type="project" value="UniProtKB-KW"/>
</dbReference>
<dbReference type="GO" id="GO:0051082">
    <property type="term" value="F:unfolded protein binding"/>
    <property type="evidence" value="ECO:0007669"/>
    <property type="project" value="UniProtKB-UniRule"/>
</dbReference>
<dbReference type="GO" id="GO:0042026">
    <property type="term" value="P:protein refolding"/>
    <property type="evidence" value="ECO:0007669"/>
    <property type="project" value="UniProtKB-UniRule"/>
</dbReference>
<dbReference type="CDD" id="cd03344">
    <property type="entry name" value="GroEL"/>
    <property type="match status" value="1"/>
</dbReference>
<dbReference type="FunFam" id="1.10.560.10:FF:000001">
    <property type="entry name" value="60 kDa chaperonin"/>
    <property type="match status" value="1"/>
</dbReference>
<dbReference type="FunFam" id="3.50.7.10:FF:000001">
    <property type="entry name" value="60 kDa chaperonin"/>
    <property type="match status" value="1"/>
</dbReference>
<dbReference type="Gene3D" id="3.50.7.10">
    <property type="entry name" value="GroEL"/>
    <property type="match status" value="1"/>
</dbReference>
<dbReference type="Gene3D" id="1.10.560.10">
    <property type="entry name" value="GroEL-like equatorial domain"/>
    <property type="match status" value="1"/>
</dbReference>
<dbReference type="Gene3D" id="3.30.260.10">
    <property type="entry name" value="TCP-1-like chaperonin intermediate domain"/>
    <property type="match status" value="1"/>
</dbReference>
<dbReference type="HAMAP" id="MF_00600">
    <property type="entry name" value="CH60"/>
    <property type="match status" value="1"/>
</dbReference>
<dbReference type="InterPro" id="IPR018370">
    <property type="entry name" value="Chaperonin_Cpn60_CS"/>
</dbReference>
<dbReference type="InterPro" id="IPR001844">
    <property type="entry name" value="Cpn60/GroEL"/>
</dbReference>
<dbReference type="InterPro" id="IPR002423">
    <property type="entry name" value="Cpn60/GroEL/TCP-1"/>
</dbReference>
<dbReference type="InterPro" id="IPR027409">
    <property type="entry name" value="GroEL-like_apical_dom_sf"/>
</dbReference>
<dbReference type="InterPro" id="IPR027413">
    <property type="entry name" value="GROEL-like_equatorial_sf"/>
</dbReference>
<dbReference type="InterPro" id="IPR027410">
    <property type="entry name" value="TCP-1-like_intermed_sf"/>
</dbReference>
<dbReference type="NCBIfam" id="TIGR02348">
    <property type="entry name" value="GroEL"/>
    <property type="match status" value="1"/>
</dbReference>
<dbReference type="NCBIfam" id="NF000592">
    <property type="entry name" value="PRK00013.1"/>
    <property type="match status" value="1"/>
</dbReference>
<dbReference type="NCBIfam" id="NF009487">
    <property type="entry name" value="PRK12849.1"/>
    <property type="match status" value="1"/>
</dbReference>
<dbReference type="NCBIfam" id="NF009488">
    <property type="entry name" value="PRK12850.1"/>
    <property type="match status" value="1"/>
</dbReference>
<dbReference type="NCBIfam" id="NF009489">
    <property type="entry name" value="PRK12851.1"/>
    <property type="match status" value="1"/>
</dbReference>
<dbReference type="PANTHER" id="PTHR45633">
    <property type="entry name" value="60 KDA HEAT SHOCK PROTEIN, MITOCHONDRIAL"/>
    <property type="match status" value="1"/>
</dbReference>
<dbReference type="Pfam" id="PF00118">
    <property type="entry name" value="Cpn60_TCP1"/>
    <property type="match status" value="1"/>
</dbReference>
<dbReference type="PRINTS" id="PR00298">
    <property type="entry name" value="CHAPERONIN60"/>
</dbReference>
<dbReference type="SUPFAM" id="SSF52029">
    <property type="entry name" value="GroEL apical domain-like"/>
    <property type="match status" value="1"/>
</dbReference>
<dbReference type="SUPFAM" id="SSF48592">
    <property type="entry name" value="GroEL equatorial domain-like"/>
    <property type="match status" value="1"/>
</dbReference>
<dbReference type="SUPFAM" id="SSF54849">
    <property type="entry name" value="GroEL-intermediate domain like"/>
    <property type="match status" value="1"/>
</dbReference>
<dbReference type="PROSITE" id="PS00296">
    <property type="entry name" value="CHAPERONINS_CPN60"/>
    <property type="match status" value="1"/>
</dbReference>
<feature type="chain" id="PRO_1000130083" description="Chaperonin GroEL">
    <location>
        <begin position="1"/>
        <end position="548"/>
    </location>
</feature>
<feature type="binding site" evidence="1">
    <location>
        <begin position="30"/>
        <end position="33"/>
    </location>
    <ligand>
        <name>ATP</name>
        <dbReference type="ChEBI" id="CHEBI:30616"/>
    </ligand>
</feature>
<feature type="binding site" evidence="1">
    <location>
        <position position="51"/>
    </location>
    <ligand>
        <name>ATP</name>
        <dbReference type="ChEBI" id="CHEBI:30616"/>
    </ligand>
</feature>
<feature type="binding site" evidence="1">
    <location>
        <begin position="87"/>
        <end position="91"/>
    </location>
    <ligand>
        <name>ATP</name>
        <dbReference type="ChEBI" id="CHEBI:30616"/>
    </ligand>
</feature>
<feature type="binding site" evidence="1">
    <location>
        <position position="415"/>
    </location>
    <ligand>
        <name>ATP</name>
        <dbReference type="ChEBI" id="CHEBI:30616"/>
    </ligand>
</feature>
<feature type="binding site" evidence="1">
    <location>
        <position position="495"/>
    </location>
    <ligand>
        <name>ATP</name>
        <dbReference type="ChEBI" id="CHEBI:30616"/>
    </ligand>
</feature>
<comment type="function">
    <text evidence="1">Together with its co-chaperonin GroES, plays an essential role in assisting protein folding. The GroEL-GroES system forms a nano-cage that allows encapsulation of the non-native substrate proteins and provides a physical environment optimized to promote and accelerate protein folding.</text>
</comment>
<comment type="catalytic activity">
    <reaction evidence="1">
        <text>ATP + H2O + a folded polypeptide = ADP + phosphate + an unfolded polypeptide.</text>
        <dbReference type="EC" id="5.6.1.7"/>
    </reaction>
</comment>
<comment type="subunit">
    <text evidence="1">Forms a cylinder of 14 subunits composed of two heptameric rings stacked back-to-back. Interacts with the co-chaperonin GroES.</text>
</comment>
<comment type="subcellular location">
    <subcellularLocation>
        <location evidence="1">Cytoplasm</location>
    </subcellularLocation>
</comment>
<comment type="similarity">
    <text evidence="1">Belongs to the chaperonin (HSP60) family.</text>
</comment>
<organism>
    <name type="scientific">Yersinia pestis bv. Antiqua (strain Angola)</name>
    <dbReference type="NCBI Taxonomy" id="349746"/>
    <lineage>
        <taxon>Bacteria</taxon>
        <taxon>Pseudomonadati</taxon>
        <taxon>Pseudomonadota</taxon>
        <taxon>Gammaproteobacteria</taxon>
        <taxon>Enterobacterales</taxon>
        <taxon>Yersiniaceae</taxon>
        <taxon>Yersinia</taxon>
    </lineage>
</organism>
<proteinExistence type="inferred from homology"/>
<protein>
    <recommendedName>
        <fullName evidence="1">Chaperonin GroEL</fullName>
        <ecNumber evidence="1">5.6.1.7</ecNumber>
    </recommendedName>
    <alternativeName>
        <fullName evidence="1">60 kDa chaperonin</fullName>
    </alternativeName>
    <alternativeName>
        <fullName evidence="1">Chaperonin-60</fullName>
        <shortName evidence="1">Cpn60</shortName>
    </alternativeName>
</protein>
<name>CH60_YERPG</name>